<evidence type="ECO:0000250" key="1">
    <source>
        <dbReference type="UniProtKB" id="Q9JJL8"/>
    </source>
</evidence>
<evidence type="ECO:0000256" key="2">
    <source>
        <dbReference type="SAM" id="MobiDB-lite"/>
    </source>
</evidence>
<evidence type="ECO:0000269" key="3">
    <source>
    </source>
</evidence>
<evidence type="ECO:0000269" key="4">
    <source>
    </source>
</evidence>
<evidence type="ECO:0000305" key="5"/>
<evidence type="ECO:0000305" key="6">
    <source>
    </source>
</evidence>
<evidence type="ECO:0007744" key="7">
    <source>
        <dbReference type="PDB" id="1WLE"/>
    </source>
</evidence>
<evidence type="ECO:0007829" key="8">
    <source>
        <dbReference type="PDB" id="1WLE"/>
    </source>
</evidence>
<organism>
    <name type="scientific">Bos taurus</name>
    <name type="common">Bovine</name>
    <dbReference type="NCBI Taxonomy" id="9913"/>
    <lineage>
        <taxon>Eukaryota</taxon>
        <taxon>Metazoa</taxon>
        <taxon>Chordata</taxon>
        <taxon>Craniata</taxon>
        <taxon>Vertebrata</taxon>
        <taxon>Euteleostomi</taxon>
        <taxon>Mammalia</taxon>
        <taxon>Eutheria</taxon>
        <taxon>Laurasiatheria</taxon>
        <taxon>Artiodactyla</taxon>
        <taxon>Ruminantia</taxon>
        <taxon>Pecora</taxon>
        <taxon>Bovidae</taxon>
        <taxon>Bovinae</taxon>
        <taxon>Bos</taxon>
    </lineage>
</organism>
<accession>Q9N0F3</accession>
<accession>A5D7G7</accession>
<accession>Q58CP7</accession>
<accession>Q58DN2</accession>
<feature type="transit peptide" description="Mitochondrion" evidence="3">
    <location>
        <begin position="1"/>
        <end position="34"/>
    </location>
</feature>
<feature type="chain" id="PRO_0000035821" description="Serine--tRNA ligase, mitochondrial">
    <location>
        <begin position="35"/>
        <end position="518"/>
    </location>
</feature>
<feature type="region of interest" description="Disordered" evidence="2">
    <location>
        <begin position="497"/>
        <end position="518"/>
    </location>
</feature>
<feature type="binding site" evidence="4 7">
    <location>
        <begin position="299"/>
        <end position="301"/>
    </location>
    <ligand>
        <name>L-serine</name>
        <dbReference type="ChEBI" id="CHEBI:33384"/>
    </ligand>
</feature>
<feature type="binding site" evidence="4 7">
    <location>
        <begin position="330"/>
        <end position="332"/>
    </location>
    <ligand>
        <name>ATP</name>
        <dbReference type="ChEBI" id="CHEBI:30616"/>
    </ligand>
</feature>
<feature type="binding site" evidence="4 7">
    <location>
        <position position="345"/>
    </location>
    <ligand>
        <name>ATP</name>
        <dbReference type="ChEBI" id="CHEBI:30616"/>
    </ligand>
</feature>
<feature type="binding site" evidence="4 7">
    <location>
        <position position="352"/>
    </location>
    <ligand>
        <name>L-serine</name>
        <dbReference type="ChEBI" id="CHEBI:33384"/>
    </ligand>
</feature>
<feature type="binding site" evidence="4 7">
    <location>
        <begin position="418"/>
        <end position="421"/>
    </location>
    <ligand>
        <name>ATP</name>
        <dbReference type="ChEBI" id="CHEBI:30616"/>
    </ligand>
</feature>
<feature type="binding site" evidence="4 7">
    <location>
        <position position="453"/>
    </location>
    <ligand>
        <name>L-serine</name>
        <dbReference type="ChEBI" id="CHEBI:33384"/>
    </ligand>
</feature>
<feature type="modified residue" description="N6-acetyllysine" evidence="1">
    <location>
        <position position="110"/>
    </location>
</feature>
<feature type="modified residue" description="N6-succinyllysine" evidence="1">
    <location>
        <position position="195"/>
    </location>
</feature>
<feature type="modified residue" description="N6-succinyllysine" evidence="1">
    <location>
        <position position="337"/>
    </location>
</feature>
<feature type="sequence conflict" description="In Ref. 2; AAX46747." evidence="5" ref="2">
    <original>Q</original>
    <variation>H</variation>
    <location>
        <position position="438"/>
    </location>
</feature>
<feature type="helix" evidence="8">
    <location>
        <begin position="43"/>
        <end position="49"/>
    </location>
</feature>
<feature type="helix" evidence="8">
    <location>
        <begin position="60"/>
        <end position="65"/>
    </location>
</feature>
<feature type="helix" evidence="8">
    <location>
        <begin position="67"/>
        <end position="77"/>
    </location>
</feature>
<feature type="helix" evidence="8">
    <location>
        <begin position="83"/>
        <end position="85"/>
    </location>
</feature>
<feature type="helix" evidence="8">
    <location>
        <begin position="86"/>
        <end position="124"/>
    </location>
</feature>
<feature type="helix" evidence="8">
    <location>
        <begin position="129"/>
        <end position="131"/>
    </location>
</feature>
<feature type="helix" evidence="8">
    <location>
        <begin position="133"/>
        <end position="167"/>
    </location>
</feature>
<feature type="helix" evidence="8">
    <location>
        <begin position="183"/>
        <end position="185"/>
    </location>
</feature>
<feature type="strand" evidence="8">
    <location>
        <begin position="187"/>
        <end position="193"/>
    </location>
</feature>
<feature type="helix" evidence="8">
    <location>
        <begin position="205"/>
        <end position="211"/>
    </location>
</feature>
<feature type="turn" evidence="8">
    <location>
        <begin position="221"/>
        <end position="224"/>
    </location>
</feature>
<feature type="strand" evidence="8">
    <location>
        <begin position="230"/>
        <end position="232"/>
    </location>
</feature>
<feature type="helix" evidence="8">
    <location>
        <begin position="234"/>
        <end position="252"/>
    </location>
</feature>
<feature type="strand" evidence="8">
    <location>
        <begin position="256"/>
        <end position="259"/>
    </location>
</feature>
<feature type="strand" evidence="8">
    <location>
        <begin position="262"/>
        <end position="264"/>
    </location>
</feature>
<feature type="helix" evidence="8">
    <location>
        <begin position="266"/>
        <end position="272"/>
    </location>
</feature>
<feature type="strand" evidence="8">
    <location>
        <begin position="276"/>
        <end position="280"/>
    </location>
</feature>
<feature type="turn" evidence="8">
    <location>
        <begin position="288"/>
        <end position="290"/>
    </location>
</feature>
<feature type="strand" evidence="8">
    <location>
        <begin position="291"/>
        <end position="293"/>
    </location>
</feature>
<feature type="helix" evidence="8">
    <location>
        <begin position="300"/>
        <end position="308"/>
    </location>
</feature>
<feature type="strand" evidence="8">
    <location>
        <begin position="311"/>
        <end position="314"/>
    </location>
</feature>
<feature type="helix" evidence="8">
    <location>
        <begin position="315"/>
        <end position="317"/>
    </location>
</feature>
<feature type="strand" evidence="8">
    <location>
        <begin position="319"/>
        <end position="329"/>
    </location>
</feature>
<feature type="strand" evidence="8">
    <location>
        <begin position="341"/>
        <end position="344"/>
    </location>
</feature>
<feature type="strand" evidence="8">
    <location>
        <begin position="346"/>
        <end position="357"/>
    </location>
</feature>
<feature type="helix" evidence="8">
    <location>
        <begin position="361"/>
        <end position="381"/>
    </location>
</feature>
<feature type="strand" evidence="8">
    <location>
        <begin position="386"/>
        <end position="390"/>
    </location>
</feature>
<feature type="helix" evidence="8">
    <location>
        <begin position="393"/>
        <end position="395"/>
    </location>
</feature>
<feature type="turn" evidence="8">
    <location>
        <begin position="397"/>
        <end position="399"/>
    </location>
</feature>
<feature type="strand" evidence="8">
    <location>
        <begin position="401"/>
        <end position="410"/>
    </location>
</feature>
<feature type="turn" evidence="8">
    <location>
        <begin position="411"/>
        <end position="414"/>
    </location>
</feature>
<feature type="strand" evidence="8">
    <location>
        <begin position="415"/>
        <end position="424"/>
    </location>
</feature>
<feature type="helix" evidence="8">
    <location>
        <begin position="428"/>
        <end position="433"/>
    </location>
</feature>
<feature type="strand" evidence="8">
    <location>
        <begin position="436"/>
        <end position="438"/>
    </location>
</feature>
<feature type="strand" evidence="8">
    <location>
        <begin position="440"/>
        <end position="442"/>
    </location>
</feature>
<feature type="strand" evidence="8">
    <location>
        <begin position="444"/>
        <end position="446"/>
    </location>
</feature>
<feature type="strand" evidence="8">
    <location>
        <begin position="448"/>
        <end position="456"/>
    </location>
</feature>
<feature type="helix" evidence="8">
    <location>
        <begin position="457"/>
        <end position="468"/>
    </location>
</feature>
<feature type="helix" evidence="8">
    <location>
        <begin position="479"/>
        <end position="481"/>
    </location>
</feature>
<feature type="helix" evidence="8">
    <location>
        <begin position="482"/>
        <end position="485"/>
    </location>
</feature>
<feature type="strand" evidence="8">
    <location>
        <begin position="486"/>
        <end position="490"/>
    </location>
</feature>
<feature type="strand" evidence="8">
    <location>
        <begin position="502"/>
        <end position="505"/>
    </location>
</feature>
<sequence>MAASIVRRLGPLVAGRGLRLRGGCVCNQSFKRSFATERQDRNLLYEHAREGYSALPLLDMESLCAYPEDAARALDLRKGELRSKDLPGIISTWQELRQLREQIRSLEEEKEAVTEAVRALVVNQDNSQVQQDPQYQSLRARGREIRKQLTLLYPKEAQLEEQFYLRALRLPNQTHPDVPVGDESQARVLHVVGDKPAFSFQPRGHLEIAEKLDIIRQKRLSHVSGHRSYYLRGAGALLQHGLVNFTLNKLIHRGFTPMTVPDLLRGVVFEGCGMTPNAKPSQIYNIDPSRFEDLNLAGTAEVGLAGYFMDHSVAFRDLPIRMVCSSTCYRAETDTGKEPWGLYRVHHFTKVEMFGVTGPGLEQSSELLEEFLSLQMEILTELGLHFRVLDMPTQELGLPAYRKFDIEAWMPGRGRFGEVTSASNCTDFQSRRLHIMFQTEAGELQFAHTVNATGCAVPRLLIALLESYQQKDGSVLVPPALQPYLGTDRITTPTHVPLQYIGPNQPQKPRLPGQPASS</sequence>
<name>SYSM_BOVIN</name>
<proteinExistence type="evidence at protein level"/>
<dbReference type="EC" id="6.1.1.11" evidence="3"/>
<dbReference type="EMBL" id="AB029947">
    <property type="protein sequence ID" value="BAA99556.1"/>
    <property type="molecule type" value="mRNA"/>
</dbReference>
<dbReference type="EMBL" id="BT021565">
    <property type="protein sequence ID" value="AAX46412.1"/>
    <property type="molecule type" value="mRNA"/>
</dbReference>
<dbReference type="EMBL" id="BT021900">
    <property type="protein sequence ID" value="AAX46747.1"/>
    <property type="molecule type" value="mRNA"/>
</dbReference>
<dbReference type="EMBL" id="BC140548">
    <property type="protein sequence ID" value="AAI40549.1"/>
    <property type="molecule type" value="mRNA"/>
</dbReference>
<dbReference type="RefSeq" id="NP_776882.1">
    <property type="nucleotide sequence ID" value="NM_174457.3"/>
</dbReference>
<dbReference type="PDB" id="1WLE">
    <property type="method" value="X-ray"/>
    <property type="resolution" value="1.65 A"/>
    <property type="chains" value="A/B=35-518"/>
</dbReference>
<dbReference type="PDBsum" id="1WLE"/>
<dbReference type="SMR" id="Q9N0F3"/>
<dbReference type="FunCoup" id="Q9N0F3">
    <property type="interactions" value="1721"/>
</dbReference>
<dbReference type="STRING" id="9913.ENSBTAP00000002334"/>
<dbReference type="PaxDb" id="9913-ENSBTAP00000002334"/>
<dbReference type="GeneID" id="282060"/>
<dbReference type="KEGG" id="bta:282060"/>
<dbReference type="CTD" id="54938"/>
<dbReference type="VEuPathDB" id="HostDB:ENSBTAG00000001780"/>
<dbReference type="eggNOG" id="KOG2509">
    <property type="taxonomic scope" value="Eukaryota"/>
</dbReference>
<dbReference type="HOGENOM" id="CLU_023797_4_1_1"/>
<dbReference type="InParanoid" id="Q9N0F3"/>
<dbReference type="OMA" id="EQNCIDR"/>
<dbReference type="OrthoDB" id="10264585at2759"/>
<dbReference type="BRENDA" id="6.1.1.11">
    <property type="organism ID" value="908"/>
</dbReference>
<dbReference type="UniPathway" id="UPA00906">
    <property type="reaction ID" value="UER00895"/>
</dbReference>
<dbReference type="EvolutionaryTrace" id="Q9N0F3"/>
<dbReference type="Proteomes" id="UP000009136">
    <property type="component" value="Chromosome 18"/>
</dbReference>
<dbReference type="Bgee" id="ENSBTAG00000001780">
    <property type="expression patterns" value="Expressed in laryngeal cartilage and 105 other cell types or tissues"/>
</dbReference>
<dbReference type="GO" id="GO:0005829">
    <property type="term" value="C:cytosol"/>
    <property type="evidence" value="ECO:0000318"/>
    <property type="project" value="GO_Central"/>
</dbReference>
<dbReference type="GO" id="GO:0005759">
    <property type="term" value="C:mitochondrial matrix"/>
    <property type="evidence" value="ECO:0007669"/>
    <property type="project" value="UniProtKB-SubCell"/>
</dbReference>
<dbReference type="GO" id="GO:0005739">
    <property type="term" value="C:mitochondrion"/>
    <property type="evidence" value="ECO:0000314"/>
    <property type="project" value="UniProtKB"/>
</dbReference>
<dbReference type="GO" id="GO:0005524">
    <property type="term" value="F:ATP binding"/>
    <property type="evidence" value="ECO:0000314"/>
    <property type="project" value="UniProtKB"/>
</dbReference>
<dbReference type="GO" id="GO:0004828">
    <property type="term" value="F:serine-tRNA ligase activity"/>
    <property type="evidence" value="ECO:0000314"/>
    <property type="project" value="UniProtKB"/>
</dbReference>
<dbReference type="GO" id="GO:0000049">
    <property type="term" value="F:tRNA binding"/>
    <property type="evidence" value="ECO:0000318"/>
    <property type="project" value="GO_Central"/>
</dbReference>
<dbReference type="GO" id="GO:0070158">
    <property type="term" value="P:mitochondrial seryl-tRNA aminoacylation"/>
    <property type="evidence" value="ECO:0000318"/>
    <property type="project" value="GO_Central"/>
</dbReference>
<dbReference type="GO" id="GO:0006434">
    <property type="term" value="P:seryl-tRNA aminoacylation"/>
    <property type="evidence" value="ECO:0000314"/>
    <property type="project" value="UniProtKB"/>
</dbReference>
<dbReference type="CDD" id="cd00770">
    <property type="entry name" value="SerRS_core"/>
    <property type="match status" value="1"/>
</dbReference>
<dbReference type="FunFam" id="3.30.930.10:FF:000047">
    <property type="entry name" value="serine--tRNA ligase, mitochondrial isoform X2"/>
    <property type="match status" value="1"/>
</dbReference>
<dbReference type="FunFam" id="1.10.287.40:FF:000005">
    <property type="entry name" value="Seryl-tRNA synthetase 2, mitochondrial"/>
    <property type="match status" value="1"/>
</dbReference>
<dbReference type="Gene3D" id="3.30.930.10">
    <property type="entry name" value="Bira Bifunctional Protein, Domain 2"/>
    <property type="match status" value="1"/>
</dbReference>
<dbReference type="Gene3D" id="1.10.287.40">
    <property type="entry name" value="Serine-tRNA synthetase, tRNA binding domain"/>
    <property type="match status" value="1"/>
</dbReference>
<dbReference type="InterPro" id="IPR002314">
    <property type="entry name" value="aa-tRNA-synt_IIb"/>
</dbReference>
<dbReference type="InterPro" id="IPR006195">
    <property type="entry name" value="aa-tRNA-synth_II"/>
</dbReference>
<dbReference type="InterPro" id="IPR045864">
    <property type="entry name" value="aa-tRNA-synth_II/BPL/LPL"/>
</dbReference>
<dbReference type="InterPro" id="IPR002317">
    <property type="entry name" value="Ser-tRNA-ligase_type_1"/>
</dbReference>
<dbReference type="InterPro" id="IPR042103">
    <property type="entry name" value="SerRS_1_N_sf"/>
</dbReference>
<dbReference type="InterPro" id="IPR033729">
    <property type="entry name" value="SerRS_core"/>
</dbReference>
<dbReference type="InterPro" id="IPR010978">
    <property type="entry name" value="tRNA-bd_arm"/>
</dbReference>
<dbReference type="NCBIfam" id="TIGR00414">
    <property type="entry name" value="serS"/>
    <property type="match status" value="1"/>
</dbReference>
<dbReference type="PANTHER" id="PTHR11778">
    <property type="entry name" value="SERYL-TRNA SYNTHETASE"/>
    <property type="match status" value="1"/>
</dbReference>
<dbReference type="Pfam" id="PF00587">
    <property type="entry name" value="tRNA-synt_2b"/>
    <property type="match status" value="1"/>
</dbReference>
<dbReference type="PRINTS" id="PR00981">
    <property type="entry name" value="TRNASYNTHSER"/>
</dbReference>
<dbReference type="SUPFAM" id="SSF55681">
    <property type="entry name" value="Class II aaRS and biotin synthetases"/>
    <property type="match status" value="1"/>
</dbReference>
<dbReference type="SUPFAM" id="SSF46589">
    <property type="entry name" value="tRNA-binding arm"/>
    <property type="match status" value="1"/>
</dbReference>
<dbReference type="PROSITE" id="PS50862">
    <property type="entry name" value="AA_TRNA_LIGASE_II"/>
    <property type="match status" value="1"/>
</dbReference>
<gene>
    <name type="primary">SARS2</name>
    <name type="synonym">SARSM</name>
</gene>
<protein>
    <recommendedName>
        <fullName>Serine--tRNA ligase, mitochondrial</fullName>
        <ecNumber evidence="3">6.1.1.11</ecNumber>
    </recommendedName>
    <alternativeName>
        <fullName>SerRSmt</fullName>
    </alternativeName>
    <alternativeName>
        <fullName>Seryl-tRNA synthetase</fullName>
        <shortName>SerRS</shortName>
    </alternativeName>
    <alternativeName>
        <fullName>Seryl-tRNA(Ser/Sec) synthetase</fullName>
    </alternativeName>
</protein>
<reference key="1">
    <citation type="journal article" date="2000" name="J. Biol. Chem.">
        <title>Characterization and tRNA recognition of mammalian mitochondrial seryl-tRNA synthetase.</title>
        <authorList>
            <person name="Yokogawa T."/>
            <person name="Shimada N."/>
            <person name="Takeuchi N."/>
            <person name="Benkowski L."/>
            <person name="Suzuki T."/>
            <person name="Omori A."/>
            <person name="Ueda T."/>
            <person name="Nishikawa K."/>
            <person name="Spremulli L.L."/>
            <person name="Watanabe K."/>
        </authorList>
    </citation>
    <scope>NUCLEOTIDE SEQUENCE [MRNA]</scope>
    <scope>PROTEIN SEQUENCE OF 35-55; 111-145; 167-176; 196-211; 396-407 AND 472-500</scope>
    <scope>FUNCTION</scope>
    <scope>CATALYTIC ACTIVITY</scope>
    <scope>SUBCELLULAR LOCATION</scope>
    <source>
        <tissue>Liver</tissue>
    </source>
</reference>
<reference key="2">
    <citation type="journal article" date="2005" name="BMC Genomics">
        <title>Characterization of 954 bovine full-CDS cDNA sequences.</title>
        <authorList>
            <person name="Harhay G.P."/>
            <person name="Sonstegard T.S."/>
            <person name="Keele J.W."/>
            <person name="Heaton M.P."/>
            <person name="Clawson M.L."/>
            <person name="Snelling W.M."/>
            <person name="Wiedmann R.T."/>
            <person name="Van Tassell C.P."/>
            <person name="Smith T.P.L."/>
        </authorList>
    </citation>
    <scope>NUCLEOTIDE SEQUENCE [LARGE SCALE MRNA]</scope>
</reference>
<reference key="3">
    <citation type="submission" date="2007-04" db="EMBL/GenBank/DDBJ databases">
        <authorList>
            <consortium name="NIH - Mammalian Gene Collection (MGC) project"/>
        </authorList>
    </citation>
    <scope>NUCLEOTIDE SEQUENCE [LARGE SCALE MRNA]</scope>
    <source>
        <strain>Hereford</strain>
        <tissue>Uterus</tissue>
    </source>
</reference>
<reference key="4">
    <citation type="journal article" date="2005" name="EMBO J.">
        <title>Dual-mode recognition of noncanonical tRNAs(Ser) by seryl-tRNA synthetase in mammalian mitochondria.</title>
        <authorList>
            <person name="Chimnaronk S."/>
            <person name="Gravers Jeppesen M."/>
            <person name="Suzuki T."/>
            <person name="Nyborg J."/>
            <person name="Watanabe K."/>
        </authorList>
    </citation>
    <scope>X-RAY CRYSTALLOGRAPHY (1.65 ANGSTROMS) OF 35-518 IN COMPLEX WITH SERYLADENYLATE</scope>
    <scope>SUBUNIT</scope>
</reference>
<keyword id="KW-0002">3D-structure</keyword>
<keyword id="KW-0007">Acetylation</keyword>
<keyword id="KW-0030">Aminoacyl-tRNA synthetase</keyword>
<keyword id="KW-0067">ATP-binding</keyword>
<keyword id="KW-0903">Direct protein sequencing</keyword>
<keyword id="KW-0436">Ligase</keyword>
<keyword id="KW-0496">Mitochondrion</keyword>
<keyword id="KW-0547">Nucleotide-binding</keyword>
<keyword id="KW-0648">Protein biosynthesis</keyword>
<keyword id="KW-1185">Reference proteome</keyword>
<keyword id="KW-0809">Transit peptide</keyword>
<comment type="function">
    <text evidence="3">Catalyzes the attachment of serine to tRNA(Ser). Is also probably able to aminoacylate tRNA(Sec) with serine, to form the misacylated tRNA L-seryl-tRNA(Sec), which will be further converted into selenocysteinyl-tRNA(Sec).</text>
</comment>
<comment type="catalytic activity">
    <reaction evidence="3">
        <text>tRNA(Ser) + L-serine + ATP = L-seryl-tRNA(Ser) + AMP + diphosphate + H(+)</text>
        <dbReference type="Rhea" id="RHEA:12292"/>
        <dbReference type="Rhea" id="RHEA-COMP:9669"/>
        <dbReference type="Rhea" id="RHEA-COMP:9703"/>
        <dbReference type="ChEBI" id="CHEBI:15378"/>
        <dbReference type="ChEBI" id="CHEBI:30616"/>
        <dbReference type="ChEBI" id="CHEBI:33019"/>
        <dbReference type="ChEBI" id="CHEBI:33384"/>
        <dbReference type="ChEBI" id="CHEBI:78442"/>
        <dbReference type="ChEBI" id="CHEBI:78533"/>
        <dbReference type="ChEBI" id="CHEBI:456215"/>
        <dbReference type="EC" id="6.1.1.11"/>
    </reaction>
</comment>
<comment type="catalytic activity">
    <reaction evidence="3">
        <text>tRNA(Sec) + L-serine + ATP = L-seryl-tRNA(Sec) + AMP + diphosphate + H(+)</text>
        <dbReference type="Rhea" id="RHEA:42580"/>
        <dbReference type="Rhea" id="RHEA-COMP:9742"/>
        <dbReference type="Rhea" id="RHEA-COMP:10128"/>
        <dbReference type="ChEBI" id="CHEBI:15378"/>
        <dbReference type="ChEBI" id="CHEBI:30616"/>
        <dbReference type="ChEBI" id="CHEBI:33019"/>
        <dbReference type="ChEBI" id="CHEBI:33384"/>
        <dbReference type="ChEBI" id="CHEBI:78442"/>
        <dbReference type="ChEBI" id="CHEBI:78533"/>
        <dbReference type="ChEBI" id="CHEBI:456215"/>
        <dbReference type="EC" id="6.1.1.11"/>
    </reaction>
</comment>
<comment type="pathway">
    <text>Aminoacyl-tRNA biosynthesis; selenocysteinyl-tRNA(Sec) biosynthesis; L-seryl-tRNA(Sec) from L-serine and tRNA(Sec): step 1/1.</text>
</comment>
<comment type="subunit">
    <text evidence="4">Homodimer. The tRNA molecule probably binds across the dimer.</text>
</comment>
<comment type="subcellular location">
    <subcellularLocation>
        <location evidence="6">Mitochondrion matrix</location>
    </subcellularLocation>
</comment>
<comment type="domain">
    <text evidence="6">Consists of two distinct domains, a catalytic core and a N-terminal extension that is involved in tRNA binding.</text>
</comment>
<comment type="PTM">
    <text evidence="3">Two N-termini starting at positions 35 and 37 have been identified by direct sequencing.</text>
</comment>
<comment type="similarity">
    <text evidence="5">Belongs to the class-II aminoacyl-tRNA synthetase family. Type-1 seryl-tRNA synthetase subfamily.</text>
</comment>